<protein>
    <recommendedName>
        <fullName evidence="1">UDP-N-acetylglucosamine 1-carboxyvinyltransferase</fullName>
        <ecNumber evidence="1">2.5.1.7</ecNumber>
    </recommendedName>
    <alternativeName>
        <fullName evidence="1">Enoylpyruvate transferase</fullName>
    </alternativeName>
    <alternativeName>
        <fullName evidence="1">UDP-N-acetylglucosamine enolpyruvyl transferase</fullName>
        <shortName evidence="1">EPT</shortName>
    </alternativeName>
</protein>
<keyword id="KW-0131">Cell cycle</keyword>
<keyword id="KW-0132">Cell division</keyword>
<keyword id="KW-0133">Cell shape</keyword>
<keyword id="KW-0961">Cell wall biogenesis/degradation</keyword>
<keyword id="KW-0963">Cytoplasm</keyword>
<keyword id="KW-0573">Peptidoglycan synthesis</keyword>
<keyword id="KW-0670">Pyruvate</keyword>
<keyword id="KW-1185">Reference proteome</keyword>
<keyword id="KW-0808">Transferase</keyword>
<reference key="1">
    <citation type="journal article" date="2005" name="Nucleic Acids Res.">
        <title>The genome sequence of Xanthomonas oryzae pathovar oryzae KACC10331, the bacterial blight pathogen of rice.</title>
        <authorList>
            <person name="Lee B.-M."/>
            <person name="Park Y.-J."/>
            <person name="Park D.-S."/>
            <person name="Kang H.-W."/>
            <person name="Kim J.-G."/>
            <person name="Song E.-S."/>
            <person name="Park I.-C."/>
            <person name="Yoon U.-H."/>
            <person name="Hahn J.-H."/>
            <person name="Koo B.-S."/>
            <person name="Lee G.-B."/>
            <person name="Kim H."/>
            <person name="Park H.-S."/>
            <person name="Yoon K.-O."/>
            <person name="Kim J.-H."/>
            <person name="Jung C.-H."/>
            <person name="Koh N.-H."/>
            <person name="Seo J.-S."/>
            <person name="Go S.-J."/>
        </authorList>
    </citation>
    <scope>NUCLEOTIDE SEQUENCE [LARGE SCALE GENOMIC DNA]</scope>
    <source>
        <strain>KACC10331 / KXO85</strain>
    </source>
</reference>
<evidence type="ECO:0000255" key="1">
    <source>
        <dbReference type="HAMAP-Rule" id="MF_00111"/>
    </source>
</evidence>
<dbReference type="EC" id="2.5.1.7" evidence="1"/>
<dbReference type="EMBL" id="AE013598">
    <property type="protein sequence ID" value="AAW74544.1"/>
    <property type="molecule type" value="Genomic_DNA"/>
</dbReference>
<dbReference type="SMR" id="Q5H3C7"/>
<dbReference type="STRING" id="291331.XOO1290"/>
<dbReference type="KEGG" id="xoo:XOO1290"/>
<dbReference type="HOGENOM" id="CLU_027387_0_0_6"/>
<dbReference type="UniPathway" id="UPA00219"/>
<dbReference type="Proteomes" id="UP000006735">
    <property type="component" value="Chromosome"/>
</dbReference>
<dbReference type="GO" id="GO:0005737">
    <property type="term" value="C:cytoplasm"/>
    <property type="evidence" value="ECO:0007669"/>
    <property type="project" value="UniProtKB-SubCell"/>
</dbReference>
<dbReference type="GO" id="GO:0008760">
    <property type="term" value="F:UDP-N-acetylglucosamine 1-carboxyvinyltransferase activity"/>
    <property type="evidence" value="ECO:0007669"/>
    <property type="project" value="UniProtKB-UniRule"/>
</dbReference>
<dbReference type="GO" id="GO:0051301">
    <property type="term" value="P:cell division"/>
    <property type="evidence" value="ECO:0007669"/>
    <property type="project" value="UniProtKB-KW"/>
</dbReference>
<dbReference type="GO" id="GO:0071555">
    <property type="term" value="P:cell wall organization"/>
    <property type="evidence" value="ECO:0007669"/>
    <property type="project" value="UniProtKB-KW"/>
</dbReference>
<dbReference type="GO" id="GO:0009252">
    <property type="term" value="P:peptidoglycan biosynthetic process"/>
    <property type="evidence" value="ECO:0007669"/>
    <property type="project" value="UniProtKB-UniRule"/>
</dbReference>
<dbReference type="GO" id="GO:0008360">
    <property type="term" value="P:regulation of cell shape"/>
    <property type="evidence" value="ECO:0007669"/>
    <property type="project" value="UniProtKB-KW"/>
</dbReference>
<dbReference type="GO" id="GO:0019277">
    <property type="term" value="P:UDP-N-acetylgalactosamine biosynthetic process"/>
    <property type="evidence" value="ECO:0007669"/>
    <property type="project" value="InterPro"/>
</dbReference>
<dbReference type="CDD" id="cd01555">
    <property type="entry name" value="UdpNAET"/>
    <property type="match status" value="1"/>
</dbReference>
<dbReference type="FunFam" id="3.65.10.10:FF:000002">
    <property type="entry name" value="UDP-N-acetylglucosamine 1-carboxyvinyltransferase"/>
    <property type="match status" value="1"/>
</dbReference>
<dbReference type="Gene3D" id="3.65.10.10">
    <property type="entry name" value="Enolpyruvate transferase domain"/>
    <property type="match status" value="2"/>
</dbReference>
<dbReference type="HAMAP" id="MF_00111">
    <property type="entry name" value="MurA"/>
    <property type="match status" value="1"/>
</dbReference>
<dbReference type="InterPro" id="IPR001986">
    <property type="entry name" value="Enolpyruvate_Tfrase_dom"/>
</dbReference>
<dbReference type="InterPro" id="IPR036968">
    <property type="entry name" value="Enolpyruvate_Tfrase_sf"/>
</dbReference>
<dbReference type="InterPro" id="IPR050068">
    <property type="entry name" value="MurA_subfamily"/>
</dbReference>
<dbReference type="InterPro" id="IPR013792">
    <property type="entry name" value="RNA3'P_cycl/enolpyr_Trfase_a/b"/>
</dbReference>
<dbReference type="InterPro" id="IPR005750">
    <property type="entry name" value="UDP_GlcNAc_COvinyl_MurA"/>
</dbReference>
<dbReference type="NCBIfam" id="TIGR01072">
    <property type="entry name" value="murA"/>
    <property type="match status" value="1"/>
</dbReference>
<dbReference type="NCBIfam" id="NF006873">
    <property type="entry name" value="PRK09369.1"/>
    <property type="match status" value="1"/>
</dbReference>
<dbReference type="PANTHER" id="PTHR43783">
    <property type="entry name" value="UDP-N-ACETYLGLUCOSAMINE 1-CARBOXYVINYLTRANSFERASE"/>
    <property type="match status" value="1"/>
</dbReference>
<dbReference type="PANTHER" id="PTHR43783:SF1">
    <property type="entry name" value="UDP-N-ACETYLGLUCOSAMINE 1-CARBOXYVINYLTRANSFERASE"/>
    <property type="match status" value="1"/>
</dbReference>
<dbReference type="Pfam" id="PF00275">
    <property type="entry name" value="EPSP_synthase"/>
    <property type="match status" value="1"/>
</dbReference>
<dbReference type="SUPFAM" id="SSF55205">
    <property type="entry name" value="EPT/RTPC-like"/>
    <property type="match status" value="1"/>
</dbReference>
<name>MURA_XANOR</name>
<gene>
    <name evidence="1" type="primary">murA</name>
    <name type="ordered locus">XOO1290</name>
</gene>
<comment type="function">
    <text evidence="1">Cell wall formation. Adds enolpyruvyl to UDP-N-acetylglucosamine.</text>
</comment>
<comment type="catalytic activity">
    <reaction evidence="1">
        <text>phosphoenolpyruvate + UDP-N-acetyl-alpha-D-glucosamine = UDP-N-acetyl-3-O-(1-carboxyvinyl)-alpha-D-glucosamine + phosphate</text>
        <dbReference type="Rhea" id="RHEA:18681"/>
        <dbReference type="ChEBI" id="CHEBI:43474"/>
        <dbReference type="ChEBI" id="CHEBI:57705"/>
        <dbReference type="ChEBI" id="CHEBI:58702"/>
        <dbReference type="ChEBI" id="CHEBI:68483"/>
        <dbReference type="EC" id="2.5.1.7"/>
    </reaction>
</comment>
<comment type="pathway">
    <text evidence="1">Cell wall biogenesis; peptidoglycan biosynthesis.</text>
</comment>
<comment type="subcellular location">
    <subcellularLocation>
        <location evidence="1">Cytoplasm</location>
    </subcellularLocation>
</comment>
<comment type="similarity">
    <text evidence="1">Belongs to the EPSP synthase family. MurA subfamily.</text>
</comment>
<organism>
    <name type="scientific">Xanthomonas oryzae pv. oryzae (strain KACC10331 / KXO85)</name>
    <dbReference type="NCBI Taxonomy" id="291331"/>
    <lineage>
        <taxon>Bacteria</taxon>
        <taxon>Pseudomonadati</taxon>
        <taxon>Pseudomonadota</taxon>
        <taxon>Gammaproteobacteria</taxon>
        <taxon>Lysobacterales</taxon>
        <taxon>Lysobacteraceae</taxon>
        <taxon>Xanthomonas</taxon>
    </lineage>
</organism>
<feature type="chain" id="PRO_0000231303" description="UDP-N-acetylglucosamine 1-carboxyvinyltransferase">
    <location>
        <begin position="1"/>
        <end position="424"/>
    </location>
</feature>
<feature type="active site" description="Proton donor" evidence="1">
    <location>
        <position position="122"/>
    </location>
</feature>
<feature type="binding site" evidence="1">
    <location>
        <begin position="22"/>
        <end position="23"/>
    </location>
    <ligand>
        <name>phosphoenolpyruvate</name>
        <dbReference type="ChEBI" id="CHEBI:58702"/>
    </ligand>
</feature>
<feature type="binding site" evidence="1">
    <location>
        <position position="98"/>
    </location>
    <ligand>
        <name>UDP-N-acetyl-alpha-D-glucosamine</name>
        <dbReference type="ChEBI" id="CHEBI:57705"/>
    </ligand>
</feature>
<feature type="binding site" evidence="1">
    <location>
        <begin position="127"/>
        <end position="131"/>
    </location>
    <ligand>
        <name>UDP-N-acetyl-alpha-D-glucosamine</name>
        <dbReference type="ChEBI" id="CHEBI:57705"/>
    </ligand>
</feature>
<feature type="binding site" evidence="1">
    <location>
        <position position="312"/>
    </location>
    <ligand>
        <name>UDP-N-acetyl-alpha-D-glucosamine</name>
        <dbReference type="ChEBI" id="CHEBI:57705"/>
    </ligand>
</feature>
<feature type="binding site" evidence="1">
    <location>
        <position position="334"/>
    </location>
    <ligand>
        <name>UDP-N-acetyl-alpha-D-glucosamine</name>
        <dbReference type="ChEBI" id="CHEBI:57705"/>
    </ligand>
</feature>
<feature type="modified residue" description="2-(S-cysteinyl)pyruvic acid O-phosphothioketal" evidence="1">
    <location>
        <position position="122"/>
    </location>
</feature>
<proteinExistence type="inferred from homology"/>
<sequence length="424" mass="44420">MAKIVVTGGQALQGEVNISGAKNAVLPILCATLLADAPVQISNVPHLHDVITMVKLLSELGAEVTIDEGTLAKGRSILVDPRSVTHQIAPYELVKTMRASILVLGPLLARYGTAEVSLPGGCAIGSRPVDQHIKGLQALGAEISVENGYIKATSHGRLKGGRYVFDMVSVTGTENVLMAAVLAEGTTVLENAAMEPEVTDLADCMIALGAQIEGAGTPRIVVQGVQRLGGGHHAVLPDRIETGTFLVAAAMTGGSVTVRRARPETLDAMLDKLTEAGATITTTADSITLDMQGKRPRAVSLTTAPYPAFPTDMQAQFMALNCVADGVGVINETIFENRFMHVNELLRLGADIQVEGHTAIVRGAARLSGAPVMATDLRASASLILAGLVADGDTTIDRIYHLDRGYENIEEKLGALGATIQRTA</sequence>
<accession>Q5H3C7</accession>